<name>HYPDH_BOVIN</name>
<reference key="1">
    <citation type="submission" date="2007-07" db="EMBL/GenBank/DDBJ databases">
        <authorList>
            <consortium name="NIH - Mammalian Gene Collection (MGC) project"/>
        </authorList>
    </citation>
    <scope>NUCLEOTIDE SEQUENCE [LARGE SCALE MRNA]</scope>
    <source>
        <strain>Crossbred X Angus</strain>
        <tissue>Liver</tissue>
    </source>
</reference>
<protein>
    <recommendedName>
        <fullName evidence="2">Hydroxyproline dehydrogenase</fullName>
        <shortName evidence="2">HYPDH</shortName>
        <ecNumber evidence="2">1.5.5.3</ecNumber>
    </recommendedName>
    <alternativeName>
        <fullName evidence="2">Probable proline dehydrogenase 2</fullName>
        <ecNumber evidence="2">1.5.5.2</ecNumber>
    </alternativeName>
    <alternativeName>
        <fullName>Probable proline oxidase 2</fullName>
    </alternativeName>
</protein>
<keyword id="KW-0007">Acetylation</keyword>
<keyword id="KW-0274">FAD</keyword>
<keyword id="KW-0285">Flavoprotein</keyword>
<keyword id="KW-0560">Oxidoreductase</keyword>
<keyword id="KW-0642">Proline metabolism</keyword>
<keyword id="KW-1185">Reference proteome</keyword>
<comment type="function">
    <text evidence="2">Dehydrogenase that converts trans-4-L-hydroxyproline to delta-1-pyrroline-3-hydroxy-5-carboxylate (Hyp) using ubiquinone-10 as the terminal electron acceptor. Can also use proline as a substrate but with a very much lower efficiency. Does not react with other diastereomers of Hyp: trans-4-D-hydroxyproline and cis-4-L-hydroxyproline. Ubiquininone analogs such as menadione, duroquinone and ubiquinone-1 react more efficiently than oxygen as the terminal electron acceptor during catalysis.</text>
</comment>
<comment type="catalytic activity">
    <reaction evidence="2">
        <text>trans-4-hydroxy-L-proline + a quinone = (3R,5S)-1-pyrroline-3-hydroxy-5-carboxylate + a quinol + H(+)</text>
        <dbReference type="Rhea" id="RHEA:52512"/>
        <dbReference type="ChEBI" id="CHEBI:15378"/>
        <dbReference type="ChEBI" id="CHEBI:24646"/>
        <dbReference type="ChEBI" id="CHEBI:58375"/>
        <dbReference type="ChEBI" id="CHEBI:62612"/>
        <dbReference type="ChEBI" id="CHEBI:132124"/>
        <dbReference type="EC" id="1.5.5.3"/>
    </reaction>
</comment>
<comment type="catalytic activity">
    <reaction evidence="2">
        <text>L-proline + a quinone = (S)-1-pyrroline-5-carboxylate + a quinol + H(+)</text>
        <dbReference type="Rhea" id="RHEA:23784"/>
        <dbReference type="ChEBI" id="CHEBI:15378"/>
        <dbReference type="ChEBI" id="CHEBI:17388"/>
        <dbReference type="ChEBI" id="CHEBI:24646"/>
        <dbReference type="ChEBI" id="CHEBI:60039"/>
        <dbReference type="ChEBI" id="CHEBI:132124"/>
        <dbReference type="EC" id="1.5.5.2"/>
    </reaction>
</comment>
<comment type="cofactor">
    <cofactor evidence="2">
        <name>FAD</name>
        <dbReference type="ChEBI" id="CHEBI:57692"/>
    </cofactor>
</comment>
<comment type="pathway">
    <text>Amino-acid degradation; L-proline degradation into L-glutamate; L-glutamate from L-proline: step 1/2.</text>
</comment>
<comment type="similarity">
    <text evidence="3">Belongs to the proline oxidase family.</text>
</comment>
<dbReference type="EC" id="1.5.5.3" evidence="2"/>
<dbReference type="EC" id="1.5.5.2" evidence="2"/>
<dbReference type="EMBL" id="BC149682">
    <property type="protein sequence ID" value="AAI49683.1"/>
    <property type="molecule type" value="mRNA"/>
</dbReference>
<dbReference type="RefSeq" id="NP_001098437.1">
    <property type="nucleotide sequence ID" value="NM_001104967.2"/>
</dbReference>
<dbReference type="SMR" id="A6QQ74"/>
<dbReference type="FunCoup" id="A6QQ74">
    <property type="interactions" value="120"/>
</dbReference>
<dbReference type="STRING" id="9913.ENSBTAP00000058071"/>
<dbReference type="PaxDb" id="9913-ENSBTAP00000042469"/>
<dbReference type="GeneID" id="508542"/>
<dbReference type="KEGG" id="bta:508542"/>
<dbReference type="CTD" id="58510"/>
<dbReference type="eggNOG" id="KOG0186">
    <property type="taxonomic scope" value="Eukaryota"/>
</dbReference>
<dbReference type="InParanoid" id="A6QQ74"/>
<dbReference type="OrthoDB" id="5464at2759"/>
<dbReference type="UniPathway" id="UPA00261">
    <property type="reaction ID" value="UER00373"/>
</dbReference>
<dbReference type="Proteomes" id="UP000009136">
    <property type="component" value="Unplaced"/>
</dbReference>
<dbReference type="GO" id="GO:0005739">
    <property type="term" value="C:mitochondrion"/>
    <property type="evidence" value="ECO:0000318"/>
    <property type="project" value="GO_Central"/>
</dbReference>
<dbReference type="GO" id="GO:0071949">
    <property type="term" value="F:FAD binding"/>
    <property type="evidence" value="ECO:0000318"/>
    <property type="project" value="GO_Central"/>
</dbReference>
<dbReference type="GO" id="GO:0016645">
    <property type="term" value="F:oxidoreductase activity, acting on the CH-NH group of donors"/>
    <property type="evidence" value="ECO:0000250"/>
    <property type="project" value="UniProtKB"/>
</dbReference>
<dbReference type="GO" id="GO:0004657">
    <property type="term" value="F:proline dehydrogenase activity"/>
    <property type="evidence" value="ECO:0000318"/>
    <property type="project" value="GO_Central"/>
</dbReference>
<dbReference type="GO" id="GO:0010133">
    <property type="term" value="P:proline catabolic process to glutamate"/>
    <property type="evidence" value="ECO:0000318"/>
    <property type="project" value="GO_Central"/>
</dbReference>
<dbReference type="Gene3D" id="3.20.20.220">
    <property type="match status" value="1"/>
</dbReference>
<dbReference type="InterPro" id="IPR029041">
    <property type="entry name" value="FAD-linked_oxidoreductase-like"/>
</dbReference>
<dbReference type="InterPro" id="IPR002872">
    <property type="entry name" value="Proline_DH_dom"/>
</dbReference>
<dbReference type="InterPro" id="IPR015659">
    <property type="entry name" value="Proline_oxidase"/>
</dbReference>
<dbReference type="PANTHER" id="PTHR13914:SF29">
    <property type="entry name" value="HYDROXYPROLINE DEHYDROGENASE"/>
    <property type="match status" value="1"/>
</dbReference>
<dbReference type="PANTHER" id="PTHR13914">
    <property type="entry name" value="PROLINE OXIDASE"/>
    <property type="match status" value="1"/>
</dbReference>
<dbReference type="Pfam" id="PF01619">
    <property type="entry name" value="Pro_dh"/>
    <property type="match status" value="1"/>
</dbReference>
<dbReference type="SUPFAM" id="SSF51730">
    <property type="entry name" value="FAD-linked oxidoreductase"/>
    <property type="match status" value="1"/>
</dbReference>
<accession>A6QQ74</accession>
<gene>
    <name evidence="2" type="primary">PRODH2</name>
    <name evidence="2" type="synonym">HYPDH</name>
</gene>
<sequence length="461" mass="51262">MLQACRVLRSRAGPSPGSWQPLSFDGGAFHLKSIGELTRALLVLRLCAWPPLVTHGLALQAWSQRLLGSRLSGALLRASIYGQFVAGETAEEVRSCVLQLQNLGLRPLLAVPTEEEPDSAVKTGEAWYEGNLSAMLRCVDLSRGLLETPDPTGNALMQLKMTALMSTRLCKQLTSWVRRPGDSLELSPERLAEAMDSGQDLQVSCLNTEQTRHLQASLSRLHRVVQHARAQRVRLLVDAEYTSLNPALSLLVAALATRWNSSGEGGPWVWNTYQAYLKDTYERLRWDAEAADRAGLAFGVKLVRGAYLDKERETARLQGTEDPTQPDYEATSQSYSRCLELMLTQVSHRGPMCHLMVASHNEDSVRQATKRMWELGIPPDGPVCFGQLLGMCDHVSLALGQAGYAVYKSIPYGSLEEVIPYLIRRAQENRSVLRGARREQELLSQELRRRLLGRGLRVSPH</sequence>
<organism>
    <name type="scientific">Bos taurus</name>
    <name type="common">Bovine</name>
    <dbReference type="NCBI Taxonomy" id="9913"/>
    <lineage>
        <taxon>Eukaryota</taxon>
        <taxon>Metazoa</taxon>
        <taxon>Chordata</taxon>
        <taxon>Craniata</taxon>
        <taxon>Vertebrata</taxon>
        <taxon>Euteleostomi</taxon>
        <taxon>Mammalia</taxon>
        <taxon>Eutheria</taxon>
        <taxon>Laurasiatheria</taxon>
        <taxon>Artiodactyla</taxon>
        <taxon>Ruminantia</taxon>
        <taxon>Pecora</taxon>
        <taxon>Bovidae</taxon>
        <taxon>Bovinae</taxon>
        <taxon>Bos</taxon>
    </lineage>
</organism>
<proteinExistence type="evidence at transcript level"/>
<feature type="chain" id="PRO_0000308622" description="Hydroxyproline dehydrogenase">
    <location>
        <begin position="1"/>
        <end position="461"/>
    </location>
</feature>
<feature type="modified residue" description="N6-acetyllysine" evidence="1">
    <location>
        <position position="310"/>
    </location>
</feature>
<evidence type="ECO:0000250" key="1">
    <source>
        <dbReference type="UniProtKB" id="Q8VCZ9"/>
    </source>
</evidence>
<evidence type="ECO:0000250" key="2">
    <source>
        <dbReference type="UniProtKB" id="Q9UF12"/>
    </source>
</evidence>
<evidence type="ECO:0000305" key="3"/>